<proteinExistence type="inferred from homology"/>
<organism>
    <name type="scientific">Neisseria gonorrhoeae (strain ATCC 700825 / FA 1090)</name>
    <dbReference type="NCBI Taxonomy" id="242231"/>
    <lineage>
        <taxon>Bacteria</taxon>
        <taxon>Pseudomonadati</taxon>
        <taxon>Pseudomonadota</taxon>
        <taxon>Betaproteobacteria</taxon>
        <taxon>Neisseriales</taxon>
        <taxon>Neisseriaceae</taxon>
        <taxon>Neisseria</taxon>
    </lineage>
</organism>
<reference key="1">
    <citation type="submission" date="2003-03" db="EMBL/GenBank/DDBJ databases">
        <title>The complete genome sequence of Neisseria gonorrhoeae.</title>
        <authorList>
            <person name="Lewis L.A."/>
            <person name="Gillaspy A.F."/>
            <person name="McLaughlin R.E."/>
            <person name="Gipson M."/>
            <person name="Ducey T.F."/>
            <person name="Ownbey T."/>
            <person name="Hartman K."/>
            <person name="Nydick C."/>
            <person name="Carson M.B."/>
            <person name="Vaughn J."/>
            <person name="Thomson C."/>
            <person name="Song L."/>
            <person name="Lin S."/>
            <person name="Yuan X."/>
            <person name="Najar F."/>
            <person name="Zhan M."/>
            <person name="Ren Q."/>
            <person name="Zhu H."/>
            <person name="Qi S."/>
            <person name="Kenton S.M."/>
            <person name="Lai H."/>
            <person name="White J.D."/>
            <person name="Clifton S."/>
            <person name="Roe B.A."/>
            <person name="Dyer D.W."/>
        </authorList>
    </citation>
    <scope>NUCLEOTIDE SEQUENCE [LARGE SCALE GENOMIC DNA]</scope>
    <source>
        <strain>ATCC 700825 / FA 1090</strain>
    </source>
</reference>
<accession>Q5F585</accession>
<keyword id="KW-0030">Aminoacyl-tRNA synthetase</keyword>
<keyword id="KW-0067">ATP-binding</keyword>
<keyword id="KW-0963">Cytoplasm</keyword>
<keyword id="KW-0436">Ligase</keyword>
<keyword id="KW-0479">Metal-binding</keyword>
<keyword id="KW-0547">Nucleotide-binding</keyword>
<keyword id="KW-0648">Protein biosynthesis</keyword>
<keyword id="KW-1185">Reference proteome</keyword>
<keyword id="KW-0694">RNA-binding</keyword>
<keyword id="KW-0820">tRNA-binding</keyword>
<keyword id="KW-0862">Zinc</keyword>
<sequence>MTRKILVTSALPYANGSIHLGHMVEHIQTDVWVRFQKLRGHECYYCCADDTHGTPVMLAAQKQGIAPEDMIAKVRKEHLADFTGFFIGYDNYYSTHSTENKQFSQDIYRALKANGKIESRVIEQLFDPEKQMFLPDRFVKGECPKCHAQDQYGDNCEVCGTTYSPTELINPYSAVSGAKPELRESEHFFFKLGECADFLKAWTSGNNPHDGKPHLQPEALNKMKEWLGEGEETTLSDWDISRDAPYFGFEIPDAPGKYFYVWLDAPVGYMASFKNLCDRIGIDFDEYFKADSQTEMYHFIGKDILYFHALFWPAMLHFSGHRAPTGVYAHGFLTVDGQKMSKSRGTFITAKSYLEQGLNPEWMRYYIAAKLNGKIEDTDLNLQDFISRVNSDLVGKYVNIAARASGFIAKRFEGRPKDVSGSALLAKLAAESDTIAEQYENREYARALRDIMALADIVNEYVDANKPWELAKQEGQDERLHEVCSELINAFTMLTAYLAPVLPQTAANAARFLNLDAITWKNTRETLGEHAINKYEHLMQRVEQKQVDDLIEANKQSIQTASAPVEEGKYEKVAEQAGFDDFMKIDMRVAKVLNCEAVEGSTKLLKFDLDFGFEKRIIFSGIAASYPNPAELNGRMVIAVANFAPRKMAKFGVSEGMILSAATADGKLKLLDVDAGAQPGDKVG</sequence>
<dbReference type="EC" id="6.1.1.10" evidence="1"/>
<dbReference type="EMBL" id="AE004969">
    <property type="protein sequence ID" value="AAW90652.1"/>
    <property type="molecule type" value="Genomic_DNA"/>
</dbReference>
<dbReference type="RefSeq" id="WP_010951390.1">
    <property type="nucleotide sequence ID" value="NC_002946.2"/>
</dbReference>
<dbReference type="RefSeq" id="YP_209064.1">
    <property type="nucleotide sequence ID" value="NC_002946.2"/>
</dbReference>
<dbReference type="SMR" id="Q5F585"/>
<dbReference type="STRING" id="242231.NGO_2044"/>
<dbReference type="KEGG" id="ngo:NGO_2044"/>
<dbReference type="PATRIC" id="fig|242231.10.peg.2464"/>
<dbReference type="HOGENOM" id="CLU_009710_7_0_4"/>
<dbReference type="Proteomes" id="UP000000535">
    <property type="component" value="Chromosome"/>
</dbReference>
<dbReference type="GO" id="GO:0005829">
    <property type="term" value="C:cytosol"/>
    <property type="evidence" value="ECO:0007669"/>
    <property type="project" value="TreeGrafter"/>
</dbReference>
<dbReference type="GO" id="GO:0005524">
    <property type="term" value="F:ATP binding"/>
    <property type="evidence" value="ECO:0007669"/>
    <property type="project" value="UniProtKB-UniRule"/>
</dbReference>
<dbReference type="GO" id="GO:0046872">
    <property type="term" value="F:metal ion binding"/>
    <property type="evidence" value="ECO:0007669"/>
    <property type="project" value="UniProtKB-KW"/>
</dbReference>
<dbReference type="GO" id="GO:0004825">
    <property type="term" value="F:methionine-tRNA ligase activity"/>
    <property type="evidence" value="ECO:0007669"/>
    <property type="project" value="UniProtKB-UniRule"/>
</dbReference>
<dbReference type="GO" id="GO:0000049">
    <property type="term" value="F:tRNA binding"/>
    <property type="evidence" value="ECO:0007669"/>
    <property type="project" value="UniProtKB-KW"/>
</dbReference>
<dbReference type="GO" id="GO:0006431">
    <property type="term" value="P:methionyl-tRNA aminoacylation"/>
    <property type="evidence" value="ECO:0007669"/>
    <property type="project" value="UniProtKB-UniRule"/>
</dbReference>
<dbReference type="CDD" id="cd07957">
    <property type="entry name" value="Anticodon_Ia_Met"/>
    <property type="match status" value="1"/>
</dbReference>
<dbReference type="CDD" id="cd00814">
    <property type="entry name" value="MetRS_core"/>
    <property type="match status" value="1"/>
</dbReference>
<dbReference type="CDD" id="cd02800">
    <property type="entry name" value="tRNA_bind_EcMetRS_like"/>
    <property type="match status" value="1"/>
</dbReference>
<dbReference type="FunFam" id="1.10.730.10:FF:000005">
    <property type="entry name" value="Methionine--tRNA ligase"/>
    <property type="match status" value="1"/>
</dbReference>
<dbReference type="FunFam" id="2.20.28.20:FF:000001">
    <property type="entry name" value="Methionine--tRNA ligase"/>
    <property type="match status" value="1"/>
</dbReference>
<dbReference type="FunFam" id="2.40.50.140:FF:000042">
    <property type="entry name" value="Methionine--tRNA ligase"/>
    <property type="match status" value="1"/>
</dbReference>
<dbReference type="Gene3D" id="3.40.50.620">
    <property type="entry name" value="HUPs"/>
    <property type="match status" value="1"/>
</dbReference>
<dbReference type="Gene3D" id="1.10.730.10">
    <property type="entry name" value="Isoleucyl-tRNA Synthetase, Domain 1"/>
    <property type="match status" value="1"/>
</dbReference>
<dbReference type="Gene3D" id="2.20.28.20">
    <property type="entry name" value="Methionyl-tRNA synthetase, Zn-domain"/>
    <property type="match status" value="1"/>
</dbReference>
<dbReference type="Gene3D" id="2.40.50.140">
    <property type="entry name" value="Nucleic acid-binding proteins"/>
    <property type="match status" value="1"/>
</dbReference>
<dbReference type="HAMAP" id="MF_00098">
    <property type="entry name" value="Met_tRNA_synth_type1"/>
    <property type="match status" value="1"/>
</dbReference>
<dbReference type="InterPro" id="IPR001412">
    <property type="entry name" value="aa-tRNA-synth_I_CS"/>
</dbReference>
<dbReference type="InterPro" id="IPR041872">
    <property type="entry name" value="Anticodon_Met"/>
</dbReference>
<dbReference type="InterPro" id="IPR004495">
    <property type="entry name" value="Met-tRNA-synth_bsu_C"/>
</dbReference>
<dbReference type="InterPro" id="IPR023458">
    <property type="entry name" value="Met-tRNA_ligase_1"/>
</dbReference>
<dbReference type="InterPro" id="IPR014758">
    <property type="entry name" value="Met-tRNA_synth"/>
</dbReference>
<dbReference type="InterPro" id="IPR015413">
    <property type="entry name" value="Methionyl/Leucyl_tRNA_Synth"/>
</dbReference>
<dbReference type="InterPro" id="IPR033911">
    <property type="entry name" value="MetRS_core"/>
</dbReference>
<dbReference type="InterPro" id="IPR029038">
    <property type="entry name" value="MetRS_Zn"/>
</dbReference>
<dbReference type="InterPro" id="IPR012340">
    <property type="entry name" value="NA-bd_OB-fold"/>
</dbReference>
<dbReference type="InterPro" id="IPR014729">
    <property type="entry name" value="Rossmann-like_a/b/a_fold"/>
</dbReference>
<dbReference type="InterPro" id="IPR002547">
    <property type="entry name" value="tRNA-bd_dom"/>
</dbReference>
<dbReference type="InterPro" id="IPR009080">
    <property type="entry name" value="tRNAsynth_Ia_anticodon-bd"/>
</dbReference>
<dbReference type="NCBIfam" id="TIGR00398">
    <property type="entry name" value="metG"/>
    <property type="match status" value="1"/>
</dbReference>
<dbReference type="NCBIfam" id="TIGR00399">
    <property type="entry name" value="metG_C_term"/>
    <property type="match status" value="1"/>
</dbReference>
<dbReference type="NCBIfam" id="NF001100">
    <property type="entry name" value="PRK00133.1"/>
    <property type="match status" value="1"/>
</dbReference>
<dbReference type="PANTHER" id="PTHR45765">
    <property type="entry name" value="METHIONINE--TRNA LIGASE"/>
    <property type="match status" value="1"/>
</dbReference>
<dbReference type="PANTHER" id="PTHR45765:SF1">
    <property type="entry name" value="METHIONINE--TRNA LIGASE, CYTOPLASMIC"/>
    <property type="match status" value="1"/>
</dbReference>
<dbReference type="Pfam" id="PF19303">
    <property type="entry name" value="Anticodon_3"/>
    <property type="match status" value="1"/>
</dbReference>
<dbReference type="Pfam" id="PF09334">
    <property type="entry name" value="tRNA-synt_1g"/>
    <property type="match status" value="1"/>
</dbReference>
<dbReference type="Pfam" id="PF01588">
    <property type="entry name" value="tRNA_bind"/>
    <property type="match status" value="1"/>
</dbReference>
<dbReference type="PRINTS" id="PR01041">
    <property type="entry name" value="TRNASYNTHMET"/>
</dbReference>
<dbReference type="SUPFAM" id="SSF47323">
    <property type="entry name" value="Anticodon-binding domain of a subclass of class I aminoacyl-tRNA synthetases"/>
    <property type="match status" value="1"/>
</dbReference>
<dbReference type="SUPFAM" id="SSF57770">
    <property type="entry name" value="Methionyl-tRNA synthetase (MetRS), Zn-domain"/>
    <property type="match status" value="1"/>
</dbReference>
<dbReference type="SUPFAM" id="SSF50249">
    <property type="entry name" value="Nucleic acid-binding proteins"/>
    <property type="match status" value="1"/>
</dbReference>
<dbReference type="SUPFAM" id="SSF52374">
    <property type="entry name" value="Nucleotidylyl transferase"/>
    <property type="match status" value="1"/>
</dbReference>
<dbReference type="PROSITE" id="PS00178">
    <property type="entry name" value="AA_TRNA_LIGASE_I"/>
    <property type="match status" value="1"/>
</dbReference>
<dbReference type="PROSITE" id="PS50886">
    <property type="entry name" value="TRBD"/>
    <property type="match status" value="1"/>
</dbReference>
<evidence type="ECO:0000255" key="1">
    <source>
        <dbReference type="HAMAP-Rule" id="MF_00098"/>
    </source>
</evidence>
<name>SYM_NEIG1</name>
<gene>
    <name evidence="1" type="primary">metG</name>
    <name type="ordered locus">NGO_2044</name>
</gene>
<protein>
    <recommendedName>
        <fullName evidence="1">Methionine--tRNA ligase</fullName>
        <ecNumber evidence="1">6.1.1.10</ecNumber>
    </recommendedName>
    <alternativeName>
        <fullName evidence="1">Methionyl-tRNA synthetase</fullName>
        <shortName evidence="1">MetRS</shortName>
    </alternativeName>
</protein>
<feature type="chain" id="PRO_0000139144" description="Methionine--tRNA ligase">
    <location>
        <begin position="1"/>
        <end position="684"/>
    </location>
</feature>
<feature type="domain" description="tRNA-binding" evidence="1">
    <location>
        <begin position="581"/>
        <end position="684"/>
    </location>
</feature>
<feature type="short sequence motif" description="'HIGH' region">
    <location>
        <begin position="12"/>
        <end position="22"/>
    </location>
</feature>
<feature type="short sequence motif" description="'KMSKS' region">
    <location>
        <begin position="339"/>
        <end position="343"/>
    </location>
</feature>
<feature type="binding site" evidence="1">
    <location>
        <position position="143"/>
    </location>
    <ligand>
        <name>Zn(2+)</name>
        <dbReference type="ChEBI" id="CHEBI:29105"/>
    </ligand>
</feature>
<feature type="binding site" evidence="1">
    <location>
        <position position="146"/>
    </location>
    <ligand>
        <name>Zn(2+)</name>
        <dbReference type="ChEBI" id="CHEBI:29105"/>
    </ligand>
</feature>
<feature type="binding site" evidence="1">
    <location>
        <position position="156"/>
    </location>
    <ligand>
        <name>Zn(2+)</name>
        <dbReference type="ChEBI" id="CHEBI:29105"/>
    </ligand>
</feature>
<feature type="binding site" evidence="1">
    <location>
        <position position="159"/>
    </location>
    <ligand>
        <name>Zn(2+)</name>
        <dbReference type="ChEBI" id="CHEBI:29105"/>
    </ligand>
</feature>
<feature type="binding site" evidence="1">
    <location>
        <position position="342"/>
    </location>
    <ligand>
        <name>ATP</name>
        <dbReference type="ChEBI" id="CHEBI:30616"/>
    </ligand>
</feature>
<comment type="function">
    <text evidence="1">Is required not only for elongation of protein synthesis but also for the initiation of all mRNA translation through initiator tRNA(fMet) aminoacylation.</text>
</comment>
<comment type="catalytic activity">
    <reaction evidence="1">
        <text>tRNA(Met) + L-methionine + ATP = L-methionyl-tRNA(Met) + AMP + diphosphate</text>
        <dbReference type="Rhea" id="RHEA:13481"/>
        <dbReference type="Rhea" id="RHEA-COMP:9667"/>
        <dbReference type="Rhea" id="RHEA-COMP:9698"/>
        <dbReference type="ChEBI" id="CHEBI:30616"/>
        <dbReference type="ChEBI" id="CHEBI:33019"/>
        <dbReference type="ChEBI" id="CHEBI:57844"/>
        <dbReference type="ChEBI" id="CHEBI:78442"/>
        <dbReference type="ChEBI" id="CHEBI:78530"/>
        <dbReference type="ChEBI" id="CHEBI:456215"/>
        <dbReference type="EC" id="6.1.1.10"/>
    </reaction>
</comment>
<comment type="cofactor">
    <cofactor evidence="1">
        <name>Zn(2+)</name>
        <dbReference type="ChEBI" id="CHEBI:29105"/>
    </cofactor>
    <text evidence="1">Binds 1 zinc ion per subunit.</text>
</comment>
<comment type="subunit">
    <text evidence="1">Homodimer.</text>
</comment>
<comment type="subcellular location">
    <subcellularLocation>
        <location evidence="1">Cytoplasm</location>
    </subcellularLocation>
</comment>
<comment type="similarity">
    <text evidence="1">Belongs to the class-I aminoacyl-tRNA synthetase family. MetG type 1 subfamily.</text>
</comment>